<accession>B2JGE1</accession>
<keyword id="KW-0143">Chaperone</keyword>
<keyword id="KW-0963">Cytoplasm</keyword>
<keyword id="KW-0235">DNA replication</keyword>
<keyword id="KW-0479">Metal-binding</keyword>
<keyword id="KW-1185">Reference proteome</keyword>
<keyword id="KW-0677">Repeat</keyword>
<keyword id="KW-0346">Stress response</keyword>
<keyword id="KW-0862">Zinc</keyword>
<keyword id="KW-0863">Zinc-finger</keyword>
<name>DNAJ_PARP8</name>
<proteinExistence type="inferred from homology"/>
<gene>
    <name evidence="1" type="primary">dnaJ</name>
    <name type="ordered locus">Bphy_2496</name>
</gene>
<organism>
    <name type="scientific">Paraburkholderia phymatum (strain DSM 17167 / CIP 108236 / LMG 21445 / STM815)</name>
    <name type="common">Burkholderia phymatum</name>
    <dbReference type="NCBI Taxonomy" id="391038"/>
    <lineage>
        <taxon>Bacteria</taxon>
        <taxon>Pseudomonadati</taxon>
        <taxon>Pseudomonadota</taxon>
        <taxon>Betaproteobacteria</taxon>
        <taxon>Burkholderiales</taxon>
        <taxon>Burkholderiaceae</taxon>
        <taxon>Paraburkholderia</taxon>
    </lineage>
</organism>
<feature type="chain" id="PRO_1000137667" description="Chaperone protein DnaJ">
    <location>
        <begin position="1"/>
        <end position="377"/>
    </location>
</feature>
<feature type="domain" description="J" evidence="1">
    <location>
        <begin position="5"/>
        <end position="70"/>
    </location>
</feature>
<feature type="repeat" description="CXXCXGXG motif">
    <location>
        <begin position="150"/>
        <end position="157"/>
    </location>
</feature>
<feature type="repeat" description="CXXCXGXG motif">
    <location>
        <begin position="167"/>
        <end position="174"/>
    </location>
</feature>
<feature type="repeat" description="CXXCXGXG motif">
    <location>
        <begin position="189"/>
        <end position="196"/>
    </location>
</feature>
<feature type="repeat" description="CXXCXGXG motif">
    <location>
        <begin position="203"/>
        <end position="210"/>
    </location>
</feature>
<feature type="zinc finger region" description="CR-type" evidence="1">
    <location>
        <begin position="137"/>
        <end position="215"/>
    </location>
</feature>
<feature type="binding site" evidence="1">
    <location>
        <position position="150"/>
    </location>
    <ligand>
        <name>Zn(2+)</name>
        <dbReference type="ChEBI" id="CHEBI:29105"/>
        <label>1</label>
    </ligand>
</feature>
<feature type="binding site" evidence="1">
    <location>
        <position position="153"/>
    </location>
    <ligand>
        <name>Zn(2+)</name>
        <dbReference type="ChEBI" id="CHEBI:29105"/>
        <label>1</label>
    </ligand>
</feature>
<feature type="binding site" evidence="1">
    <location>
        <position position="167"/>
    </location>
    <ligand>
        <name>Zn(2+)</name>
        <dbReference type="ChEBI" id="CHEBI:29105"/>
        <label>2</label>
    </ligand>
</feature>
<feature type="binding site" evidence="1">
    <location>
        <position position="170"/>
    </location>
    <ligand>
        <name>Zn(2+)</name>
        <dbReference type="ChEBI" id="CHEBI:29105"/>
        <label>2</label>
    </ligand>
</feature>
<feature type="binding site" evidence="1">
    <location>
        <position position="189"/>
    </location>
    <ligand>
        <name>Zn(2+)</name>
        <dbReference type="ChEBI" id="CHEBI:29105"/>
        <label>2</label>
    </ligand>
</feature>
<feature type="binding site" evidence="1">
    <location>
        <position position="192"/>
    </location>
    <ligand>
        <name>Zn(2+)</name>
        <dbReference type="ChEBI" id="CHEBI:29105"/>
        <label>2</label>
    </ligand>
</feature>
<feature type="binding site" evidence="1">
    <location>
        <position position="203"/>
    </location>
    <ligand>
        <name>Zn(2+)</name>
        <dbReference type="ChEBI" id="CHEBI:29105"/>
        <label>1</label>
    </ligand>
</feature>
<feature type="binding site" evidence="1">
    <location>
        <position position="206"/>
    </location>
    <ligand>
        <name>Zn(2+)</name>
        <dbReference type="ChEBI" id="CHEBI:29105"/>
        <label>1</label>
    </ligand>
</feature>
<protein>
    <recommendedName>
        <fullName evidence="1">Chaperone protein DnaJ</fullName>
    </recommendedName>
</protein>
<sequence>MAKRDYYQVLGVAKNASDDEIKKAYRKLAMKHHPDRNPGNKDAEEHFKEAKEAYEMLSDSQKRAAYDQYGHAGVDPNMAGAGAQGFGGFADAFGDIFGDIFGQAAAGGRGGRSGPQVYRGADLRYSMEITLEQAAHGYDTQIRVPSWVSCEICHGSGAKPGTKPETCPTCNGSGAVRMSQGFFSIQQTCPKCHGTGTYIPEPCTHCHGAGKTKETKTLEVKIPAGIDDGMRIRSAGNGEPGINGGPSGDLYVEIHIKAHAVFERDGDDLHCQMPIPFTKAALGGEIEVPTLAGRATFTVPEGTQSGKTFRLRGKGIKGLRSSIAGDLYVHVQVETPVKLTDAQRDLLQQFEKSLVEGGARHSPQSKSWFDRVKSFFD</sequence>
<reference key="1">
    <citation type="journal article" date="2014" name="Stand. Genomic Sci.">
        <title>Complete genome sequence of Burkholderia phymatum STM815(T), a broad host range and efficient nitrogen-fixing symbiont of Mimosa species.</title>
        <authorList>
            <person name="Moulin L."/>
            <person name="Klonowska A."/>
            <person name="Caroline B."/>
            <person name="Booth K."/>
            <person name="Vriezen J.A."/>
            <person name="Melkonian R."/>
            <person name="James E.K."/>
            <person name="Young J.P."/>
            <person name="Bena G."/>
            <person name="Hauser L."/>
            <person name="Land M."/>
            <person name="Kyrpides N."/>
            <person name="Bruce D."/>
            <person name="Chain P."/>
            <person name="Copeland A."/>
            <person name="Pitluck S."/>
            <person name="Woyke T."/>
            <person name="Lizotte-Waniewski M."/>
            <person name="Bristow J."/>
            <person name="Riley M."/>
        </authorList>
    </citation>
    <scope>NUCLEOTIDE SEQUENCE [LARGE SCALE GENOMIC DNA]</scope>
    <source>
        <strain>DSM 17167 / CIP 108236 / LMG 21445 / STM815</strain>
    </source>
</reference>
<dbReference type="EMBL" id="CP001043">
    <property type="protein sequence ID" value="ACC71669.1"/>
    <property type="molecule type" value="Genomic_DNA"/>
</dbReference>
<dbReference type="RefSeq" id="WP_012401873.1">
    <property type="nucleotide sequence ID" value="NC_010622.1"/>
</dbReference>
<dbReference type="SMR" id="B2JGE1"/>
<dbReference type="STRING" id="391038.Bphy_2496"/>
<dbReference type="KEGG" id="bph:Bphy_2496"/>
<dbReference type="eggNOG" id="COG0484">
    <property type="taxonomic scope" value="Bacteria"/>
</dbReference>
<dbReference type="HOGENOM" id="CLU_017633_0_7_4"/>
<dbReference type="OrthoDB" id="9779889at2"/>
<dbReference type="Proteomes" id="UP000001192">
    <property type="component" value="Chromosome 1"/>
</dbReference>
<dbReference type="GO" id="GO:0005737">
    <property type="term" value="C:cytoplasm"/>
    <property type="evidence" value="ECO:0007669"/>
    <property type="project" value="UniProtKB-SubCell"/>
</dbReference>
<dbReference type="GO" id="GO:0005524">
    <property type="term" value="F:ATP binding"/>
    <property type="evidence" value="ECO:0007669"/>
    <property type="project" value="InterPro"/>
</dbReference>
<dbReference type="GO" id="GO:0031072">
    <property type="term" value="F:heat shock protein binding"/>
    <property type="evidence" value="ECO:0007669"/>
    <property type="project" value="InterPro"/>
</dbReference>
<dbReference type="GO" id="GO:0051082">
    <property type="term" value="F:unfolded protein binding"/>
    <property type="evidence" value="ECO:0007669"/>
    <property type="project" value="UniProtKB-UniRule"/>
</dbReference>
<dbReference type="GO" id="GO:0008270">
    <property type="term" value="F:zinc ion binding"/>
    <property type="evidence" value="ECO:0007669"/>
    <property type="project" value="UniProtKB-UniRule"/>
</dbReference>
<dbReference type="GO" id="GO:0051085">
    <property type="term" value="P:chaperone cofactor-dependent protein refolding"/>
    <property type="evidence" value="ECO:0007669"/>
    <property type="project" value="TreeGrafter"/>
</dbReference>
<dbReference type="GO" id="GO:0006260">
    <property type="term" value="P:DNA replication"/>
    <property type="evidence" value="ECO:0007669"/>
    <property type="project" value="UniProtKB-KW"/>
</dbReference>
<dbReference type="GO" id="GO:0042026">
    <property type="term" value="P:protein refolding"/>
    <property type="evidence" value="ECO:0007669"/>
    <property type="project" value="TreeGrafter"/>
</dbReference>
<dbReference type="GO" id="GO:0009408">
    <property type="term" value="P:response to heat"/>
    <property type="evidence" value="ECO:0007669"/>
    <property type="project" value="InterPro"/>
</dbReference>
<dbReference type="CDD" id="cd06257">
    <property type="entry name" value="DnaJ"/>
    <property type="match status" value="1"/>
</dbReference>
<dbReference type="CDD" id="cd10747">
    <property type="entry name" value="DnaJ_C"/>
    <property type="match status" value="1"/>
</dbReference>
<dbReference type="CDD" id="cd10719">
    <property type="entry name" value="DnaJ_zf"/>
    <property type="match status" value="1"/>
</dbReference>
<dbReference type="FunFam" id="1.10.287.110:FF:000031">
    <property type="entry name" value="Molecular chaperone DnaJ"/>
    <property type="match status" value="1"/>
</dbReference>
<dbReference type="FunFam" id="2.10.230.10:FF:000002">
    <property type="entry name" value="Molecular chaperone DnaJ"/>
    <property type="match status" value="1"/>
</dbReference>
<dbReference type="FunFam" id="2.60.260.20:FF:000004">
    <property type="entry name" value="Molecular chaperone DnaJ"/>
    <property type="match status" value="1"/>
</dbReference>
<dbReference type="Gene3D" id="1.10.287.110">
    <property type="entry name" value="DnaJ domain"/>
    <property type="match status" value="1"/>
</dbReference>
<dbReference type="Gene3D" id="2.10.230.10">
    <property type="entry name" value="Heat shock protein DnaJ, cysteine-rich domain"/>
    <property type="match status" value="1"/>
</dbReference>
<dbReference type="Gene3D" id="2.60.260.20">
    <property type="entry name" value="Urease metallochaperone UreE, N-terminal domain"/>
    <property type="match status" value="2"/>
</dbReference>
<dbReference type="HAMAP" id="MF_01152">
    <property type="entry name" value="DnaJ"/>
    <property type="match status" value="1"/>
</dbReference>
<dbReference type="InterPro" id="IPR012724">
    <property type="entry name" value="DnaJ"/>
</dbReference>
<dbReference type="InterPro" id="IPR002939">
    <property type="entry name" value="DnaJ_C"/>
</dbReference>
<dbReference type="InterPro" id="IPR001623">
    <property type="entry name" value="DnaJ_domain"/>
</dbReference>
<dbReference type="InterPro" id="IPR018253">
    <property type="entry name" value="DnaJ_domain_CS"/>
</dbReference>
<dbReference type="InterPro" id="IPR008971">
    <property type="entry name" value="HSP40/DnaJ_pept-bd"/>
</dbReference>
<dbReference type="InterPro" id="IPR001305">
    <property type="entry name" value="HSP_DnaJ_Cys-rich_dom"/>
</dbReference>
<dbReference type="InterPro" id="IPR036410">
    <property type="entry name" value="HSP_DnaJ_Cys-rich_dom_sf"/>
</dbReference>
<dbReference type="InterPro" id="IPR036869">
    <property type="entry name" value="J_dom_sf"/>
</dbReference>
<dbReference type="NCBIfam" id="TIGR02349">
    <property type="entry name" value="DnaJ_bact"/>
    <property type="match status" value="1"/>
</dbReference>
<dbReference type="NCBIfam" id="NF008035">
    <property type="entry name" value="PRK10767.1"/>
    <property type="match status" value="1"/>
</dbReference>
<dbReference type="PANTHER" id="PTHR43096:SF48">
    <property type="entry name" value="CHAPERONE PROTEIN DNAJ"/>
    <property type="match status" value="1"/>
</dbReference>
<dbReference type="PANTHER" id="PTHR43096">
    <property type="entry name" value="DNAJ HOMOLOG 1, MITOCHONDRIAL-RELATED"/>
    <property type="match status" value="1"/>
</dbReference>
<dbReference type="Pfam" id="PF00226">
    <property type="entry name" value="DnaJ"/>
    <property type="match status" value="1"/>
</dbReference>
<dbReference type="Pfam" id="PF01556">
    <property type="entry name" value="DnaJ_C"/>
    <property type="match status" value="1"/>
</dbReference>
<dbReference type="Pfam" id="PF00684">
    <property type="entry name" value="DnaJ_CXXCXGXG"/>
    <property type="match status" value="1"/>
</dbReference>
<dbReference type="PRINTS" id="PR00625">
    <property type="entry name" value="JDOMAIN"/>
</dbReference>
<dbReference type="SMART" id="SM00271">
    <property type="entry name" value="DnaJ"/>
    <property type="match status" value="1"/>
</dbReference>
<dbReference type="SUPFAM" id="SSF46565">
    <property type="entry name" value="Chaperone J-domain"/>
    <property type="match status" value="1"/>
</dbReference>
<dbReference type="SUPFAM" id="SSF57938">
    <property type="entry name" value="DnaJ/Hsp40 cysteine-rich domain"/>
    <property type="match status" value="1"/>
</dbReference>
<dbReference type="SUPFAM" id="SSF49493">
    <property type="entry name" value="HSP40/DnaJ peptide-binding domain"/>
    <property type="match status" value="2"/>
</dbReference>
<dbReference type="PROSITE" id="PS00636">
    <property type="entry name" value="DNAJ_1"/>
    <property type="match status" value="1"/>
</dbReference>
<dbReference type="PROSITE" id="PS50076">
    <property type="entry name" value="DNAJ_2"/>
    <property type="match status" value="1"/>
</dbReference>
<dbReference type="PROSITE" id="PS51188">
    <property type="entry name" value="ZF_CR"/>
    <property type="match status" value="1"/>
</dbReference>
<comment type="function">
    <text evidence="1">Participates actively in the response to hyperosmotic and heat shock by preventing the aggregation of stress-denatured proteins and by disaggregating proteins, also in an autonomous, DnaK-independent fashion. Unfolded proteins bind initially to DnaJ; upon interaction with the DnaJ-bound protein, DnaK hydrolyzes its bound ATP, resulting in the formation of a stable complex. GrpE releases ADP from DnaK; ATP binding to DnaK triggers the release of the substrate protein, thus completing the reaction cycle. Several rounds of ATP-dependent interactions between DnaJ, DnaK and GrpE are required for fully efficient folding. Also involved, together with DnaK and GrpE, in the DNA replication of plasmids through activation of initiation proteins.</text>
</comment>
<comment type="cofactor">
    <cofactor evidence="1">
        <name>Zn(2+)</name>
        <dbReference type="ChEBI" id="CHEBI:29105"/>
    </cofactor>
    <text evidence="1">Binds 2 Zn(2+) ions per monomer.</text>
</comment>
<comment type="subunit">
    <text evidence="1">Homodimer.</text>
</comment>
<comment type="subcellular location">
    <subcellularLocation>
        <location evidence="1">Cytoplasm</location>
    </subcellularLocation>
</comment>
<comment type="domain">
    <text evidence="1">The J domain is necessary and sufficient to stimulate DnaK ATPase activity. Zinc center 1 plays an important role in the autonomous, DnaK-independent chaperone activity of DnaJ. Zinc center 2 is essential for interaction with DnaK and for DnaJ activity.</text>
</comment>
<comment type="similarity">
    <text evidence="1">Belongs to the DnaJ family.</text>
</comment>
<evidence type="ECO:0000255" key="1">
    <source>
        <dbReference type="HAMAP-Rule" id="MF_01152"/>
    </source>
</evidence>